<name>HSSR_STAES</name>
<dbReference type="EMBL" id="AE015929">
    <property type="protein sequence ID" value="AAO05582.1"/>
    <property type="molecule type" value="Genomic_DNA"/>
</dbReference>
<dbReference type="RefSeq" id="NP_765496.1">
    <property type="nucleotide sequence ID" value="NC_004461.1"/>
</dbReference>
<dbReference type="RefSeq" id="WP_002485539.1">
    <property type="nucleotide sequence ID" value="NZ_WBME01000017.1"/>
</dbReference>
<dbReference type="SMR" id="Q8CN92"/>
<dbReference type="KEGG" id="sep:SE_1941"/>
<dbReference type="PATRIC" id="fig|176280.10.peg.1894"/>
<dbReference type="eggNOG" id="COG0745">
    <property type="taxonomic scope" value="Bacteria"/>
</dbReference>
<dbReference type="HOGENOM" id="CLU_000445_30_4_9"/>
<dbReference type="OrthoDB" id="9790442at2"/>
<dbReference type="Proteomes" id="UP000001411">
    <property type="component" value="Chromosome"/>
</dbReference>
<dbReference type="GO" id="GO:0005829">
    <property type="term" value="C:cytosol"/>
    <property type="evidence" value="ECO:0007669"/>
    <property type="project" value="TreeGrafter"/>
</dbReference>
<dbReference type="GO" id="GO:0032993">
    <property type="term" value="C:protein-DNA complex"/>
    <property type="evidence" value="ECO:0007669"/>
    <property type="project" value="TreeGrafter"/>
</dbReference>
<dbReference type="GO" id="GO:0000156">
    <property type="term" value="F:phosphorelay response regulator activity"/>
    <property type="evidence" value="ECO:0007669"/>
    <property type="project" value="TreeGrafter"/>
</dbReference>
<dbReference type="GO" id="GO:0000976">
    <property type="term" value="F:transcription cis-regulatory region binding"/>
    <property type="evidence" value="ECO:0007669"/>
    <property type="project" value="TreeGrafter"/>
</dbReference>
<dbReference type="GO" id="GO:0006355">
    <property type="term" value="P:regulation of DNA-templated transcription"/>
    <property type="evidence" value="ECO:0007669"/>
    <property type="project" value="InterPro"/>
</dbReference>
<dbReference type="CDD" id="cd17574">
    <property type="entry name" value="REC_OmpR"/>
    <property type="match status" value="1"/>
</dbReference>
<dbReference type="CDD" id="cd00383">
    <property type="entry name" value="trans_reg_C"/>
    <property type="match status" value="1"/>
</dbReference>
<dbReference type="FunFam" id="1.10.10.10:FF:000018">
    <property type="entry name" value="DNA-binding response regulator ResD"/>
    <property type="match status" value="1"/>
</dbReference>
<dbReference type="Gene3D" id="3.40.50.2300">
    <property type="match status" value="1"/>
</dbReference>
<dbReference type="Gene3D" id="6.10.250.690">
    <property type="match status" value="1"/>
</dbReference>
<dbReference type="Gene3D" id="1.10.10.10">
    <property type="entry name" value="Winged helix-like DNA-binding domain superfamily/Winged helix DNA-binding domain"/>
    <property type="match status" value="1"/>
</dbReference>
<dbReference type="InterPro" id="IPR011006">
    <property type="entry name" value="CheY-like_superfamily"/>
</dbReference>
<dbReference type="InterPro" id="IPR001867">
    <property type="entry name" value="OmpR/PhoB-type_DNA-bd"/>
</dbReference>
<dbReference type="InterPro" id="IPR001789">
    <property type="entry name" value="Sig_transdc_resp-reg_receiver"/>
</dbReference>
<dbReference type="InterPro" id="IPR039420">
    <property type="entry name" value="WalR-like"/>
</dbReference>
<dbReference type="InterPro" id="IPR036388">
    <property type="entry name" value="WH-like_DNA-bd_sf"/>
</dbReference>
<dbReference type="PANTHER" id="PTHR48111:SF49">
    <property type="entry name" value="HEME RESPONSE REGULATOR HSSR"/>
    <property type="match status" value="1"/>
</dbReference>
<dbReference type="PANTHER" id="PTHR48111">
    <property type="entry name" value="REGULATOR OF RPOS"/>
    <property type="match status" value="1"/>
</dbReference>
<dbReference type="Pfam" id="PF00072">
    <property type="entry name" value="Response_reg"/>
    <property type="match status" value="1"/>
</dbReference>
<dbReference type="Pfam" id="PF00486">
    <property type="entry name" value="Trans_reg_C"/>
    <property type="match status" value="1"/>
</dbReference>
<dbReference type="SMART" id="SM00448">
    <property type="entry name" value="REC"/>
    <property type="match status" value="1"/>
</dbReference>
<dbReference type="SMART" id="SM00862">
    <property type="entry name" value="Trans_reg_C"/>
    <property type="match status" value="1"/>
</dbReference>
<dbReference type="SUPFAM" id="SSF52172">
    <property type="entry name" value="CheY-like"/>
    <property type="match status" value="1"/>
</dbReference>
<dbReference type="PROSITE" id="PS51755">
    <property type="entry name" value="OMPR_PHOB"/>
    <property type="match status" value="1"/>
</dbReference>
<dbReference type="PROSITE" id="PS50110">
    <property type="entry name" value="RESPONSE_REGULATORY"/>
    <property type="match status" value="1"/>
</dbReference>
<organism>
    <name type="scientific">Staphylococcus epidermidis (strain ATCC 12228 / FDA PCI 1200)</name>
    <dbReference type="NCBI Taxonomy" id="176280"/>
    <lineage>
        <taxon>Bacteria</taxon>
        <taxon>Bacillati</taxon>
        <taxon>Bacillota</taxon>
        <taxon>Bacilli</taxon>
        <taxon>Bacillales</taxon>
        <taxon>Staphylococcaceae</taxon>
        <taxon>Staphylococcus</taxon>
    </lineage>
</organism>
<accession>Q8CN92</accession>
<reference key="1">
    <citation type="journal article" date="2003" name="Mol. Microbiol.">
        <title>Genome-based analysis of virulence genes in a non-biofilm-forming Staphylococcus epidermidis strain (ATCC 12228).</title>
        <authorList>
            <person name="Zhang Y.-Q."/>
            <person name="Ren S.-X."/>
            <person name="Li H.-L."/>
            <person name="Wang Y.-X."/>
            <person name="Fu G."/>
            <person name="Yang J."/>
            <person name="Qin Z.-Q."/>
            <person name="Miao Y.-G."/>
            <person name="Wang W.-Y."/>
            <person name="Chen R.-S."/>
            <person name="Shen Y."/>
            <person name="Chen Z."/>
            <person name="Yuan Z.-H."/>
            <person name="Zhao G.-P."/>
            <person name="Qu D."/>
            <person name="Danchin A."/>
            <person name="Wen Y.-M."/>
        </authorList>
    </citation>
    <scope>NUCLEOTIDE SEQUENCE [LARGE SCALE GENOMIC DNA]</scope>
    <source>
        <strain>ATCC 12228 / FDA PCI 1200</strain>
    </source>
</reference>
<comment type="function">
    <text evidence="1">Member of the two-component regulatory system HssS/HssR involved in intracellular heme homeostasis and tempering of staphylococcal virulence. Phosphorylated HssR binds to a direct repeat sequence within hrtAB promoter and activates the expression of hrtAB, an efflux pump, in response to extracellular heme, hemin, hemoglobin or blood (By similarity).</text>
</comment>
<comment type="subcellular location">
    <subcellularLocation>
        <location evidence="4">Cytoplasm</location>
    </subcellularLocation>
</comment>
<comment type="PTM">
    <text evidence="1">Phosphorylated by HssS.</text>
</comment>
<protein>
    <recommendedName>
        <fullName>Heme response regulator HssR</fullName>
    </recommendedName>
</protein>
<proteinExistence type="inferred from homology"/>
<evidence type="ECO:0000250" key="1"/>
<evidence type="ECO:0000255" key="2">
    <source>
        <dbReference type="PROSITE-ProRule" id="PRU00169"/>
    </source>
</evidence>
<evidence type="ECO:0000255" key="3">
    <source>
        <dbReference type="PROSITE-ProRule" id="PRU01091"/>
    </source>
</evidence>
<evidence type="ECO:0000305" key="4"/>
<keyword id="KW-0010">Activator</keyword>
<keyword id="KW-0963">Cytoplasm</keyword>
<keyword id="KW-0238">DNA-binding</keyword>
<keyword id="KW-0597">Phosphoprotein</keyword>
<keyword id="KW-0804">Transcription</keyword>
<keyword id="KW-0805">Transcription regulation</keyword>
<keyword id="KW-0902">Two-component regulatory system</keyword>
<keyword id="KW-0843">Virulence</keyword>
<feature type="chain" id="PRO_0000331333" description="Heme response regulator HssR">
    <location>
        <begin position="1"/>
        <end position="224"/>
    </location>
</feature>
<feature type="domain" description="Response regulatory" evidence="2">
    <location>
        <begin position="3"/>
        <end position="116"/>
    </location>
</feature>
<feature type="DNA-binding region" description="OmpR/PhoB-type" evidence="3">
    <location>
        <begin position="124"/>
        <end position="222"/>
    </location>
</feature>
<feature type="modified residue" description="4-aspartylphosphate" evidence="2">
    <location>
        <position position="52"/>
    </location>
</feature>
<gene>
    <name type="primary">hssR</name>
    <name type="ordered locus">SE_1941</name>
</gene>
<sequence>MINCLIVDDDKKLLQYVSSHLERESIQTHTFTSGEASLDFLENKNVDIAIVDIMMSGMDGFELCQTLKDDYHIPVIMLTARDALSDKERAFLSGTDDYVTKPFEVKELLFRIKAVLRRYQINADNELQLGNLILNQSYMEITVGSKTMNLPNKEFQLLFLLASNPKHIFTRDDIIGKIWGFDYEGDDRTVDVHIKRLRQRLSKLKSSVSIQTVRGQGYRVDQNV</sequence>